<sequence length="609" mass="68876">MEEEEGADDGEQGEEEVLVVNVGSTYPCKRSDGSQHDAEIVKVRYNKQAGREEYYAHYVGLNRRQNEWVDKSRLVLTKPPKEGETNGTDQEVTDTAEQPDSKTPQKRKIEEPEPEPKKAKVEEKDASKNASSLGAAGDFAEELTCPLCVELFKDPVMVACGHNFCRSCIDKAWEGQSSFACPECRESITDRKYTINRVLANLAKKAACTPVTPVEKKTRPLEKCSEHDERLKLYCKDDGTLSCVICRDSLKHASHNFLPILDAVGVYREELSAIVAPLEASLKVTEQLSSEQSDKIEQHNKNMSQYKEHITSEFEKLHKFLREREEKLLEQLKEQGENLLTEMENNLVKMQESQDAIKKTISLAKERMEDTDSISFLMDIKAFIDKCQEQQRAVISTGNTLLSKELCQGTFKGPIQYIMWKELKSVVIPSLTPMLLDPTSAHPNLHLSDGLTSVRYGENKLSLPDNPKRFSQCILVLGSQGFDSGRHYWEVEVGDKTAWDVGMASESSNRKGKIKLNPKNGYWAIWLRNGNAYKALESPSKSLSLSSHPRKIGVYVDYEGGQISFYNADDMTIIYTFNATFTEKLYPYLSPFLHDSGKNVDPLRFVHNK</sequence>
<proteinExistence type="evidence at protein level"/>
<name>NF7B_XENLA</name>
<accession>Q92021</accession>
<keyword id="KW-0002">3D-structure</keyword>
<keyword id="KW-0175">Coiled coil</keyword>
<keyword id="KW-0217">Developmental protein</keyword>
<keyword id="KW-0238">DNA-binding</keyword>
<keyword id="KW-0479">Metal-binding</keyword>
<keyword id="KW-0539">Nucleus</keyword>
<keyword id="KW-0597">Phosphoprotein</keyword>
<keyword id="KW-1185">Reference proteome</keyword>
<keyword id="KW-0804">Transcription</keyword>
<keyword id="KW-0805">Transcription regulation</keyword>
<keyword id="KW-0862">Zinc</keyword>
<keyword id="KW-0863">Zinc-finger</keyword>
<feature type="chain" id="PRO_0000055977" description="Nuclear factor 7, brain">
    <location>
        <begin position="1"/>
        <end position="609"/>
    </location>
</feature>
<feature type="domain" description="Tudor-knot" evidence="1">
    <location>
        <begin position="21"/>
        <end position="75"/>
    </location>
</feature>
<feature type="domain" description="B30.2/SPRY" evidence="4">
    <location>
        <begin position="413"/>
        <end position="609"/>
    </location>
</feature>
<feature type="zinc finger region" description="RING-type" evidence="3">
    <location>
        <begin position="145"/>
        <end position="185"/>
    </location>
</feature>
<feature type="zinc finger region" description="B box-type" evidence="2">
    <location>
        <begin position="219"/>
        <end position="260"/>
    </location>
</feature>
<feature type="region of interest" description="Disordered" evidence="5">
    <location>
        <begin position="74"/>
        <end position="129"/>
    </location>
</feature>
<feature type="coiled-coil region" evidence="1">
    <location>
        <begin position="278"/>
        <end position="371"/>
    </location>
</feature>
<feature type="compositionally biased region" description="Basic and acidic residues" evidence="5">
    <location>
        <begin position="74"/>
        <end position="84"/>
    </location>
</feature>
<feature type="compositionally biased region" description="Polar residues" evidence="5">
    <location>
        <begin position="85"/>
        <end position="102"/>
    </location>
</feature>
<feature type="compositionally biased region" description="Basic and acidic residues" evidence="5">
    <location>
        <begin position="107"/>
        <end position="127"/>
    </location>
</feature>
<feature type="binding site" evidence="2">
    <location>
        <position position="224"/>
    </location>
    <ligand>
        <name>Zn(2+)</name>
        <dbReference type="ChEBI" id="CHEBI:29105"/>
    </ligand>
</feature>
<feature type="binding site" evidence="2">
    <location>
        <position position="227"/>
    </location>
    <ligand>
        <name>Zn(2+)</name>
        <dbReference type="ChEBI" id="CHEBI:29105"/>
    </ligand>
</feature>
<feature type="binding site" evidence="2">
    <location>
        <position position="246"/>
    </location>
    <ligand>
        <name>Zn(2+)</name>
        <dbReference type="ChEBI" id="CHEBI:29105"/>
    </ligand>
</feature>
<feature type="binding site" evidence="2">
    <location>
        <position position="252"/>
    </location>
    <ligand>
        <name>Zn(2+)</name>
        <dbReference type="ChEBI" id="CHEBI:29105"/>
    </ligand>
</feature>
<feature type="modified residue" description="Phosphothreonine; by CDK1" evidence="10">
    <location>
        <position position="103"/>
    </location>
</feature>
<feature type="strand" evidence="12">
    <location>
        <begin position="237"/>
        <end position="242"/>
    </location>
</feature>
<dbReference type="EMBL" id="S64515">
    <property type="protein sequence ID" value="AAB20269.1"/>
    <property type="molecule type" value="mRNA"/>
</dbReference>
<dbReference type="EMBL" id="M63705">
    <property type="protein sequence ID" value="AAA49995.1"/>
    <property type="molecule type" value="mRNA"/>
</dbReference>
<dbReference type="PIR" id="A43906">
    <property type="entry name" value="A43906"/>
</dbReference>
<dbReference type="RefSeq" id="NP_001081473.1">
    <property type="nucleotide sequence ID" value="NM_001088004.1"/>
</dbReference>
<dbReference type="PDB" id="1FRE">
    <property type="method" value="NMR"/>
    <property type="chains" value="A=219-260"/>
</dbReference>
<dbReference type="PDBsum" id="1FRE"/>
<dbReference type="SMR" id="Q92021"/>
<dbReference type="BioGRID" id="99195">
    <property type="interactions" value="5"/>
</dbReference>
<dbReference type="IntAct" id="Q92021">
    <property type="interactions" value="2"/>
</dbReference>
<dbReference type="iPTMnet" id="Q92021"/>
<dbReference type="GeneID" id="397856"/>
<dbReference type="KEGG" id="xla:397856"/>
<dbReference type="AGR" id="Xenbase:XB-GENE-6252335"/>
<dbReference type="CTD" id="397856"/>
<dbReference type="Xenbase" id="XB-GENE-6252335">
    <property type="gene designation" value="xnf7.L"/>
</dbReference>
<dbReference type="OrthoDB" id="128536at2759"/>
<dbReference type="EvolutionaryTrace" id="Q92021"/>
<dbReference type="Proteomes" id="UP000186698">
    <property type="component" value="Chromosome 9_10L"/>
</dbReference>
<dbReference type="Bgee" id="397856">
    <property type="expression patterns" value="Expressed in neurula embryo and 19 other cell types or tissues"/>
</dbReference>
<dbReference type="GO" id="GO:0005737">
    <property type="term" value="C:cytoplasm"/>
    <property type="evidence" value="ECO:0000318"/>
    <property type="project" value="GO_Central"/>
</dbReference>
<dbReference type="GO" id="GO:0005634">
    <property type="term" value="C:nucleus"/>
    <property type="evidence" value="ECO:0007669"/>
    <property type="project" value="UniProtKB-SubCell"/>
</dbReference>
<dbReference type="GO" id="GO:0003677">
    <property type="term" value="F:DNA binding"/>
    <property type="evidence" value="ECO:0007669"/>
    <property type="project" value="UniProtKB-KW"/>
</dbReference>
<dbReference type="GO" id="GO:0061630">
    <property type="term" value="F:ubiquitin protein ligase activity"/>
    <property type="evidence" value="ECO:0000318"/>
    <property type="project" value="GO_Central"/>
</dbReference>
<dbReference type="GO" id="GO:0008270">
    <property type="term" value="F:zinc ion binding"/>
    <property type="evidence" value="ECO:0007669"/>
    <property type="project" value="UniProtKB-KW"/>
</dbReference>
<dbReference type="GO" id="GO:0045087">
    <property type="term" value="P:innate immune response"/>
    <property type="evidence" value="ECO:0000318"/>
    <property type="project" value="GO_Central"/>
</dbReference>
<dbReference type="CDD" id="cd19800">
    <property type="entry name" value="Bbox2_xNF7-like"/>
    <property type="match status" value="1"/>
</dbReference>
<dbReference type="CDD" id="cd18984">
    <property type="entry name" value="CBD_MOF_like"/>
    <property type="match status" value="1"/>
</dbReference>
<dbReference type="CDD" id="cd16594">
    <property type="entry name" value="RING-HC_TRIM7-like_C-IV"/>
    <property type="match status" value="1"/>
</dbReference>
<dbReference type="CDD" id="cd13733">
    <property type="entry name" value="SPRY_PRY_C-I_1"/>
    <property type="match status" value="1"/>
</dbReference>
<dbReference type="FunFam" id="2.60.120.920:FF:000004">
    <property type="entry name" value="Butyrophilin subfamily 1 member A1"/>
    <property type="match status" value="1"/>
</dbReference>
<dbReference type="Gene3D" id="2.30.30.140">
    <property type="match status" value="1"/>
</dbReference>
<dbReference type="Gene3D" id="2.60.120.920">
    <property type="match status" value="1"/>
</dbReference>
<dbReference type="Gene3D" id="3.30.160.60">
    <property type="entry name" value="Classic Zinc Finger"/>
    <property type="match status" value="1"/>
</dbReference>
<dbReference type="Gene3D" id="3.30.40.10">
    <property type="entry name" value="Zinc/RING finger domain, C3HC4 (zinc finger)"/>
    <property type="match status" value="1"/>
</dbReference>
<dbReference type="InterPro" id="IPR001870">
    <property type="entry name" value="B30.2/SPRY"/>
</dbReference>
<dbReference type="InterPro" id="IPR043136">
    <property type="entry name" value="B30.2/SPRY_sf"/>
</dbReference>
<dbReference type="InterPro" id="IPR003649">
    <property type="entry name" value="Bbox_C"/>
</dbReference>
<dbReference type="InterPro" id="IPR003879">
    <property type="entry name" value="Butyrophylin_SPRY"/>
</dbReference>
<dbReference type="InterPro" id="IPR016197">
    <property type="entry name" value="Chromo-like_dom_sf"/>
</dbReference>
<dbReference type="InterPro" id="IPR000953">
    <property type="entry name" value="Chromo/chromo_shadow_dom"/>
</dbReference>
<dbReference type="InterPro" id="IPR013320">
    <property type="entry name" value="ConA-like_dom_sf"/>
</dbReference>
<dbReference type="InterPro" id="IPR006574">
    <property type="entry name" value="PRY"/>
</dbReference>
<dbReference type="InterPro" id="IPR003877">
    <property type="entry name" value="SPRY_dom"/>
</dbReference>
<dbReference type="InterPro" id="IPR050143">
    <property type="entry name" value="TRIM/RBCC"/>
</dbReference>
<dbReference type="InterPro" id="IPR025995">
    <property type="entry name" value="Tudor-knot"/>
</dbReference>
<dbReference type="InterPro" id="IPR000315">
    <property type="entry name" value="Znf_B-box"/>
</dbReference>
<dbReference type="InterPro" id="IPR001841">
    <property type="entry name" value="Znf_RING"/>
</dbReference>
<dbReference type="InterPro" id="IPR013083">
    <property type="entry name" value="Znf_RING/FYVE/PHD"/>
</dbReference>
<dbReference type="InterPro" id="IPR017907">
    <property type="entry name" value="Znf_RING_CS"/>
</dbReference>
<dbReference type="PANTHER" id="PTHR24103">
    <property type="entry name" value="E3 UBIQUITIN-PROTEIN LIGASE TRIM"/>
    <property type="match status" value="1"/>
</dbReference>
<dbReference type="Pfam" id="PF13765">
    <property type="entry name" value="PRY"/>
    <property type="match status" value="1"/>
</dbReference>
<dbReference type="Pfam" id="PF00622">
    <property type="entry name" value="SPRY"/>
    <property type="match status" value="1"/>
</dbReference>
<dbReference type="Pfam" id="PF11717">
    <property type="entry name" value="Tudor-knot"/>
    <property type="match status" value="1"/>
</dbReference>
<dbReference type="Pfam" id="PF00643">
    <property type="entry name" value="zf-B_box"/>
    <property type="match status" value="1"/>
</dbReference>
<dbReference type="Pfam" id="PF15227">
    <property type="entry name" value="zf-C3HC4_4"/>
    <property type="match status" value="1"/>
</dbReference>
<dbReference type="PRINTS" id="PR01407">
    <property type="entry name" value="BUTYPHLNCDUF"/>
</dbReference>
<dbReference type="SMART" id="SM00502">
    <property type="entry name" value="BBC"/>
    <property type="match status" value="1"/>
</dbReference>
<dbReference type="SMART" id="SM00336">
    <property type="entry name" value="BBOX"/>
    <property type="match status" value="1"/>
</dbReference>
<dbReference type="SMART" id="SM00298">
    <property type="entry name" value="CHROMO"/>
    <property type="match status" value="1"/>
</dbReference>
<dbReference type="SMART" id="SM00589">
    <property type="entry name" value="PRY"/>
    <property type="match status" value="1"/>
</dbReference>
<dbReference type="SMART" id="SM00184">
    <property type="entry name" value="RING"/>
    <property type="match status" value="1"/>
</dbReference>
<dbReference type="SMART" id="SM00449">
    <property type="entry name" value="SPRY"/>
    <property type="match status" value="1"/>
</dbReference>
<dbReference type="SUPFAM" id="SSF57845">
    <property type="entry name" value="B-box zinc-binding domain"/>
    <property type="match status" value="1"/>
</dbReference>
<dbReference type="SUPFAM" id="SSF54160">
    <property type="entry name" value="Chromo domain-like"/>
    <property type="match status" value="1"/>
</dbReference>
<dbReference type="SUPFAM" id="SSF49899">
    <property type="entry name" value="Concanavalin A-like lectins/glucanases"/>
    <property type="match status" value="1"/>
</dbReference>
<dbReference type="SUPFAM" id="SSF57850">
    <property type="entry name" value="RING/U-box"/>
    <property type="match status" value="1"/>
</dbReference>
<dbReference type="PROSITE" id="PS50188">
    <property type="entry name" value="B302_SPRY"/>
    <property type="match status" value="1"/>
</dbReference>
<dbReference type="PROSITE" id="PS50119">
    <property type="entry name" value="ZF_BBOX"/>
    <property type="match status" value="1"/>
</dbReference>
<dbReference type="PROSITE" id="PS00518">
    <property type="entry name" value="ZF_RING_1"/>
    <property type="match status" value="1"/>
</dbReference>
<dbReference type="PROSITE" id="PS50089">
    <property type="entry name" value="ZF_RING_2"/>
    <property type="match status" value="1"/>
</dbReference>
<comment type="function">
    <text evidence="6">Transcription factor that determines dorsal-ventral body axis.</text>
</comment>
<comment type="subunit">
    <text evidence="8">Monomer.</text>
</comment>
<comment type="subcellular location">
    <subcellularLocation>
        <location evidence="6">Nucleus</location>
    </subcellularLocation>
</comment>
<comment type="tissue specificity">
    <text evidence="6 7">At the neurula stage, high expression in dorsal embryo region including neural folds and somites. Also high expression in adult brain (CNS) and low expression in oocytes.</text>
</comment>
<comment type="developmental stage">
    <text evidence="6">Expressed both maternally and zygotically.</text>
</comment>
<comment type="PTM">
    <text evidence="6">Threonine (predominantly) and serine residues are phosphorylated during oocyte maturation, when CDK1 is active.</text>
</comment>
<reference evidence="9 11" key="1">
    <citation type="journal article" date="1991" name="Dev. Biol.">
        <title>The cloning and characterization of a maternally expressed novel zinc finger nuclear phosphoprotein (xnf7) in Xenopus laevis.</title>
        <authorList>
            <person name="Reddy B.A."/>
            <person name="Kloc M."/>
            <person name="Etkin L.D."/>
        </authorList>
    </citation>
    <scope>NUCLEOTIDE SEQUENCE [MRNA]</scope>
    <scope>FUNCTION</scope>
    <scope>SUBCELLULAR LOCATION</scope>
    <scope>TISSUE SPECIFICITY</scope>
    <scope>DEVELOPMENTAL STAGE</scope>
    <scope>PHOSPHORYLATION AT THR-103</scope>
    <source>
        <tissue evidence="6">Brain</tissue>
    </source>
</reference>
<reference evidence="9" key="2">
    <citation type="journal article" date="1995" name="Mech. Dev.">
        <title>Two forms of Xenopus nuclear factor 7 have overlapping spatial but different temporal patterns of expression during development.</title>
        <authorList>
            <person name="Gong S.-G."/>
            <person name="Reddy B.A."/>
            <person name="Etkin L.D."/>
        </authorList>
    </citation>
    <scope>NUCLEOTIDE SEQUENCE [MRNA]</scope>
    <scope>TISSUE SPECIFICITY</scope>
    <source>
        <tissue evidence="7">Brain</tissue>
    </source>
</reference>
<reference evidence="9" key="3">
    <citation type="journal article" date="1995" name="EMBO J.">
        <title>Novel topology of a zinc-binding domain from a protein involved in regulating early Xenopus development.</title>
        <authorList>
            <person name="Borden K.L.B."/>
            <person name="Lally J.M."/>
            <person name="Martin S.R."/>
            <person name="O'Reilly N.J."/>
            <person name="Etkin L.D."/>
            <person name="Freemont P.S."/>
        </authorList>
    </citation>
    <scope>STRUCTURE BY NMR OF 219-260</scope>
</reference>
<protein>
    <recommendedName>
        <fullName>Nuclear factor 7, brain</fullName>
        <shortName>xNF7</shortName>
        <shortName>xNF7-B</shortName>
    </recommendedName>
</protein>
<organism>
    <name type="scientific">Xenopus laevis</name>
    <name type="common">African clawed frog</name>
    <dbReference type="NCBI Taxonomy" id="8355"/>
    <lineage>
        <taxon>Eukaryota</taxon>
        <taxon>Metazoa</taxon>
        <taxon>Chordata</taxon>
        <taxon>Craniata</taxon>
        <taxon>Vertebrata</taxon>
        <taxon>Euteleostomi</taxon>
        <taxon>Amphibia</taxon>
        <taxon>Batrachia</taxon>
        <taxon>Anura</taxon>
        <taxon>Pipoidea</taxon>
        <taxon>Pipidae</taxon>
        <taxon>Xenopodinae</taxon>
        <taxon>Xenopus</taxon>
        <taxon>Xenopus</taxon>
    </lineage>
</organism>
<evidence type="ECO:0000255" key="1"/>
<evidence type="ECO:0000255" key="2">
    <source>
        <dbReference type="PROSITE-ProRule" id="PRU00024"/>
    </source>
</evidence>
<evidence type="ECO:0000255" key="3">
    <source>
        <dbReference type="PROSITE-ProRule" id="PRU00175"/>
    </source>
</evidence>
<evidence type="ECO:0000255" key="4">
    <source>
        <dbReference type="PROSITE-ProRule" id="PRU00548"/>
    </source>
</evidence>
<evidence type="ECO:0000256" key="5">
    <source>
        <dbReference type="SAM" id="MobiDB-lite"/>
    </source>
</evidence>
<evidence type="ECO:0000269" key="6">
    <source>
    </source>
</evidence>
<evidence type="ECO:0000269" key="7">
    <source>
    </source>
</evidence>
<evidence type="ECO:0000269" key="8">
    <source>
    </source>
</evidence>
<evidence type="ECO:0000305" key="9"/>
<evidence type="ECO:0000305" key="10">
    <source>
    </source>
</evidence>
<evidence type="ECO:0000312" key="11">
    <source>
        <dbReference type="EMBL" id="AAB20269.1"/>
    </source>
</evidence>
<evidence type="ECO:0007829" key="12">
    <source>
        <dbReference type="PDB" id="1FRE"/>
    </source>
</evidence>